<keyword id="KW-0067">ATP-binding</keyword>
<keyword id="KW-0963">Cytoplasm</keyword>
<keyword id="KW-0418">Kinase</keyword>
<keyword id="KW-0460">Magnesium</keyword>
<keyword id="KW-0479">Metal-binding</keyword>
<keyword id="KW-0546">Nucleotide metabolism</keyword>
<keyword id="KW-0547">Nucleotide-binding</keyword>
<keyword id="KW-0597">Phosphoprotein</keyword>
<keyword id="KW-0808">Transferase</keyword>
<proteinExistence type="inferred from homology"/>
<protein>
    <recommendedName>
        <fullName evidence="1">Nucleoside diphosphate kinase</fullName>
        <shortName evidence="1">NDK</shortName>
        <shortName evidence="1">NDP kinase</shortName>
        <ecNumber evidence="1">2.7.4.6</ecNumber>
    </recommendedName>
    <alternativeName>
        <fullName evidence="1">Nucleoside-2-P kinase</fullName>
    </alternativeName>
</protein>
<organism>
    <name type="scientific">Rhizobium etli (strain CIAT 652)</name>
    <dbReference type="NCBI Taxonomy" id="491916"/>
    <lineage>
        <taxon>Bacteria</taxon>
        <taxon>Pseudomonadati</taxon>
        <taxon>Pseudomonadota</taxon>
        <taxon>Alphaproteobacteria</taxon>
        <taxon>Hyphomicrobiales</taxon>
        <taxon>Rhizobiaceae</taxon>
        <taxon>Rhizobium/Agrobacterium group</taxon>
        <taxon>Rhizobium</taxon>
    </lineage>
</organism>
<comment type="function">
    <text evidence="1">Major role in the synthesis of nucleoside triphosphates other than ATP. The ATP gamma phosphate is transferred to the NDP beta phosphate via a ping-pong mechanism, using a phosphorylated active-site intermediate.</text>
</comment>
<comment type="catalytic activity">
    <reaction evidence="1">
        <text>a 2'-deoxyribonucleoside 5'-diphosphate + ATP = a 2'-deoxyribonucleoside 5'-triphosphate + ADP</text>
        <dbReference type="Rhea" id="RHEA:44640"/>
        <dbReference type="ChEBI" id="CHEBI:30616"/>
        <dbReference type="ChEBI" id="CHEBI:61560"/>
        <dbReference type="ChEBI" id="CHEBI:73316"/>
        <dbReference type="ChEBI" id="CHEBI:456216"/>
        <dbReference type="EC" id="2.7.4.6"/>
    </reaction>
</comment>
<comment type="catalytic activity">
    <reaction evidence="1">
        <text>a ribonucleoside 5'-diphosphate + ATP = a ribonucleoside 5'-triphosphate + ADP</text>
        <dbReference type="Rhea" id="RHEA:18113"/>
        <dbReference type="ChEBI" id="CHEBI:30616"/>
        <dbReference type="ChEBI" id="CHEBI:57930"/>
        <dbReference type="ChEBI" id="CHEBI:61557"/>
        <dbReference type="ChEBI" id="CHEBI:456216"/>
        <dbReference type="EC" id="2.7.4.6"/>
    </reaction>
</comment>
<comment type="cofactor">
    <cofactor evidence="1">
        <name>Mg(2+)</name>
        <dbReference type="ChEBI" id="CHEBI:18420"/>
    </cofactor>
</comment>
<comment type="subunit">
    <text evidence="1">Homotetramer.</text>
</comment>
<comment type="subcellular location">
    <subcellularLocation>
        <location evidence="1">Cytoplasm</location>
    </subcellularLocation>
</comment>
<comment type="similarity">
    <text evidence="1">Belongs to the NDK family.</text>
</comment>
<dbReference type="EC" id="2.7.4.6" evidence="1"/>
<dbReference type="EMBL" id="CP001074">
    <property type="protein sequence ID" value="ACE90518.1"/>
    <property type="molecule type" value="Genomic_DNA"/>
</dbReference>
<dbReference type="SMR" id="B3PV77"/>
<dbReference type="KEGG" id="rec:RHECIAT_CH0001540"/>
<dbReference type="eggNOG" id="COG0105">
    <property type="taxonomic scope" value="Bacteria"/>
</dbReference>
<dbReference type="HOGENOM" id="CLU_060216_8_1_5"/>
<dbReference type="Proteomes" id="UP000008817">
    <property type="component" value="Chromosome"/>
</dbReference>
<dbReference type="GO" id="GO:0005737">
    <property type="term" value="C:cytoplasm"/>
    <property type="evidence" value="ECO:0007669"/>
    <property type="project" value="UniProtKB-SubCell"/>
</dbReference>
<dbReference type="GO" id="GO:0005524">
    <property type="term" value="F:ATP binding"/>
    <property type="evidence" value="ECO:0007669"/>
    <property type="project" value="UniProtKB-UniRule"/>
</dbReference>
<dbReference type="GO" id="GO:0046872">
    <property type="term" value="F:metal ion binding"/>
    <property type="evidence" value="ECO:0007669"/>
    <property type="project" value="UniProtKB-KW"/>
</dbReference>
<dbReference type="GO" id="GO:0004550">
    <property type="term" value="F:nucleoside diphosphate kinase activity"/>
    <property type="evidence" value="ECO:0007669"/>
    <property type="project" value="UniProtKB-UniRule"/>
</dbReference>
<dbReference type="GO" id="GO:0006241">
    <property type="term" value="P:CTP biosynthetic process"/>
    <property type="evidence" value="ECO:0007669"/>
    <property type="project" value="UniProtKB-UniRule"/>
</dbReference>
<dbReference type="GO" id="GO:0006183">
    <property type="term" value="P:GTP biosynthetic process"/>
    <property type="evidence" value="ECO:0007669"/>
    <property type="project" value="UniProtKB-UniRule"/>
</dbReference>
<dbReference type="GO" id="GO:0006228">
    <property type="term" value="P:UTP biosynthetic process"/>
    <property type="evidence" value="ECO:0007669"/>
    <property type="project" value="UniProtKB-UniRule"/>
</dbReference>
<dbReference type="CDD" id="cd04413">
    <property type="entry name" value="NDPk_I"/>
    <property type="match status" value="1"/>
</dbReference>
<dbReference type="FunFam" id="3.30.70.141:FF:000039">
    <property type="entry name" value="Nucleoside diphosphate kinase B"/>
    <property type="match status" value="1"/>
</dbReference>
<dbReference type="Gene3D" id="3.30.70.141">
    <property type="entry name" value="Nucleoside diphosphate kinase-like domain"/>
    <property type="match status" value="1"/>
</dbReference>
<dbReference type="HAMAP" id="MF_00451">
    <property type="entry name" value="NDP_kinase"/>
    <property type="match status" value="1"/>
</dbReference>
<dbReference type="InterPro" id="IPR034907">
    <property type="entry name" value="NDK-like_dom"/>
</dbReference>
<dbReference type="InterPro" id="IPR036850">
    <property type="entry name" value="NDK-like_dom_sf"/>
</dbReference>
<dbReference type="InterPro" id="IPR001564">
    <property type="entry name" value="Nucleoside_diP_kinase"/>
</dbReference>
<dbReference type="InterPro" id="IPR023005">
    <property type="entry name" value="Nucleoside_diP_kinase_AS"/>
</dbReference>
<dbReference type="NCBIfam" id="NF001908">
    <property type="entry name" value="PRK00668.1"/>
    <property type="match status" value="1"/>
</dbReference>
<dbReference type="PANTHER" id="PTHR46161">
    <property type="entry name" value="NUCLEOSIDE DIPHOSPHATE KINASE"/>
    <property type="match status" value="1"/>
</dbReference>
<dbReference type="PANTHER" id="PTHR46161:SF3">
    <property type="entry name" value="NUCLEOSIDE DIPHOSPHATE KINASE DDB_G0292928-RELATED"/>
    <property type="match status" value="1"/>
</dbReference>
<dbReference type="Pfam" id="PF00334">
    <property type="entry name" value="NDK"/>
    <property type="match status" value="1"/>
</dbReference>
<dbReference type="PRINTS" id="PR01243">
    <property type="entry name" value="NUCDPKINASE"/>
</dbReference>
<dbReference type="SMART" id="SM00562">
    <property type="entry name" value="NDK"/>
    <property type="match status" value="1"/>
</dbReference>
<dbReference type="SUPFAM" id="SSF54919">
    <property type="entry name" value="Nucleoside diphosphate kinase, NDK"/>
    <property type="match status" value="1"/>
</dbReference>
<dbReference type="PROSITE" id="PS00469">
    <property type="entry name" value="NDPK"/>
    <property type="match status" value="1"/>
</dbReference>
<dbReference type="PROSITE" id="PS51374">
    <property type="entry name" value="NDPK_LIKE"/>
    <property type="match status" value="1"/>
</dbReference>
<evidence type="ECO:0000255" key="1">
    <source>
        <dbReference type="HAMAP-Rule" id="MF_00451"/>
    </source>
</evidence>
<reference key="1">
    <citation type="journal article" date="2010" name="Appl. Environ. Microbiol.">
        <title>Conserved symbiotic plasmid DNA sequences in the multireplicon pangenomic structure of Rhizobium etli.</title>
        <authorList>
            <person name="Gonzalez V."/>
            <person name="Acosta J.L."/>
            <person name="Santamaria R.I."/>
            <person name="Bustos P."/>
            <person name="Fernandez J.L."/>
            <person name="Hernandez Gonzalez I.L."/>
            <person name="Diaz R."/>
            <person name="Flores M."/>
            <person name="Palacios R."/>
            <person name="Mora J."/>
            <person name="Davila G."/>
        </authorList>
    </citation>
    <scope>NUCLEOTIDE SEQUENCE [LARGE SCALE GENOMIC DNA]</scope>
    <source>
        <strain>CIAT 652</strain>
    </source>
</reference>
<accession>B3PV77</accession>
<feature type="chain" id="PRO_1000125005" description="Nucleoside diphosphate kinase">
    <location>
        <begin position="1"/>
        <end position="140"/>
    </location>
</feature>
<feature type="active site" description="Pros-phosphohistidine intermediate" evidence="1">
    <location>
        <position position="117"/>
    </location>
</feature>
<feature type="binding site" evidence="1">
    <location>
        <position position="11"/>
    </location>
    <ligand>
        <name>ATP</name>
        <dbReference type="ChEBI" id="CHEBI:30616"/>
    </ligand>
</feature>
<feature type="binding site" evidence="1">
    <location>
        <position position="59"/>
    </location>
    <ligand>
        <name>ATP</name>
        <dbReference type="ChEBI" id="CHEBI:30616"/>
    </ligand>
</feature>
<feature type="binding site" evidence="1">
    <location>
        <position position="87"/>
    </location>
    <ligand>
        <name>ATP</name>
        <dbReference type="ChEBI" id="CHEBI:30616"/>
    </ligand>
</feature>
<feature type="binding site" evidence="1">
    <location>
        <position position="93"/>
    </location>
    <ligand>
        <name>ATP</name>
        <dbReference type="ChEBI" id="CHEBI:30616"/>
    </ligand>
</feature>
<feature type="binding site" evidence="1">
    <location>
        <position position="104"/>
    </location>
    <ligand>
        <name>ATP</name>
        <dbReference type="ChEBI" id="CHEBI:30616"/>
    </ligand>
</feature>
<feature type="binding site" evidence="1">
    <location>
        <position position="114"/>
    </location>
    <ligand>
        <name>ATP</name>
        <dbReference type="ChEBI" id="CHEBI:30616"/>
    </ligand>
</feature>
<sequence length="140" mass="15309">MAIERTFSMIKPDATKRNLTGAITKMLEDAGLRVVASKRVWMSRREAEGFYAVHKDRPFFGELVEGMTSGPTVVQVLEGEGAILKNREIMGATNPANADEGTIRKVHALSIGENSVHGSDAPETAAQEIKYWFSDTEIVG</sequence>
<name>NDK_RHIE6</name>
<gene>
    <name evidence="1" type="primary">ndk</name>
    <name type="ordered locus">RHECIAT_CH0001540</name>
</gene>